<name>MDTH_ECOUT</name>
<sequence>MSRVSQARNLGKYFLLIDNMLVVLGFFVVFPLISIRFVDQMGWAAVMVGIALGLRQFIQQGLGIFGGAIADRFGAKPMIVTGMLMRAAGFATMGIAHEPWLLWFSCLLSGLGGTLFDPPRSALVVKLIRPQQRGRFFSLLMMQDSAGAVIGALLGSWLLQYDFRLVCATGAVLFVLCAAFNAWLLPAWKLSTVRTPVREGMTRVMRDKRFVTYVLTLAGYYMLAVQVMLMLPIMVNDVAGAPSAVKWMYAIEACLSLTLLYPIARWSEKHFRLEHRLMAGLLIMSLSMMPVGMVSGLQQLFTLICLFYIGSIIAEPARETLSASLADARARGSYMGFSRLGLAIGGAIGYIGGGWLFDLGKSAHQPELPWMMLGIIGIFTFLALGWQFSQKRAARRLLERDA</sequence>
<accession>Q1RD92</accession>
<reference key="1">
    <citation type="journal article" date="2006" name="Proc. Natl. Acad. Sci. U.S.A.">
        <title>Identification of genes subject to positive selection in uropathogenic strains of Escherichia coli: a comparative genomics approach.</title>
        <authorList>
            <person name="Chen S.L."/>
            <person name="Hung C.-S."/>
            <person name="Xu J."/>
            <person name="Reigstad C.S."/>
            <person name="Magrini V."/>
            <person name="Sabo A."/>
            <person name="Blasiar D."/>
            <person name="Bieri T."/>
            <person name="Meyer R.R."/>
            <person name="Ozersky P."/>
            <person name="Armstrong J.R."/>
            <person name="Fulton R.S."/>
            <person name="Latreille J.P."/>
            <person name="Spieth J."/>
            <person name="Hooton T.M."/>
            <person name="Mardis E.R."/>
            <person name="Hultgren S.J."/>
            <person name="Gordon J.I."/>
        </authorList>
    </citation>
    <scope>NUCLEOTIDE SEQUENCE [LARGE SCALE GENOMIC DNA]</scope>
    <source>
        <strain>UTI89 / UPEC</strain>
    </source>
</reference>
<proteinExistence type="inferred from homology"/>
<comment type="function">
    <text evidence="1">Confers resistance to norfloxacin and enoxacin.</text>
</comment>
<comment type="subcellular location">
    <subcellularLocation>
        <location evidence="1">Cell inner membrane</location>
        <topology evidence="1">Multi-pass membrane protein</topology>
    </subcellularLocation>
</comment>
<comment type="similarity">
    <text evidence="1">Belongs to the major facilitator superfamily. DHA1 family. MdtH (TC 2.A.1.2.21) subfamily.</text>
</comment>
<comment type="sequence caution" evidence="2">
    <conflict type="erroneous initiation">
        <sequence resource="EMBL-CDS" id="ABE06672"/>
    </conflict>
</comment>
<protein>
    <recommendedName>
        <fullName evidence="1">Multidrug resistance protein MdtH</fullName>
    </recommendedName>
</protein>
<gene>
    <name evidence="1" type="primary">mdtH</name>
    <name type="ordered locus">UTI89_C1190</name>
</gene>
<feature type="chain" id="PRO_0000280496" description="Multidrug resistance protein MdtH">
    <location>
        <begin position="1"/>
        <end position="402"/>
    </location>
</feature>
<feature type="topological domain" description="Cytoplasmic" evidence="1">
    <location>
        <begin position="1"/>
        <end position="12"/>
    </location>
</feature>
<feature type="transmembrane region" description="Helical" evidence="1">
    <location>
        <begin position="13"/>
        <end position="33"/>
    </location>
</feature>
<feature type="topological domain" description="Periplasmic" evidence="1">
    <location>
        <begin position="34"/>
        <end position="98"/>
    </location>
</feature>
<feature type="transmembrane region" description="Helical" evidence="1">
    <location>
        <begin position="99"/>
        <end position="116"/>
    </location>
</feature>
<feature type="topological domain" description="Cytoplasmic" evidence="1">
    <location>
        <begin position="117"/>
        <end position="138"/>
    </location>
</feature>
<feature type="transmembrane region" description="Helical" evidence="1">
    <location>
        <begin position="139"/>
        <end position="159"/>
    </location>
</feature>
<feature type="topological domain" description="Periplasmic" evidence="1">
    <location>
        <begin position="160"/>
        <end position="164"/>
    </location>
</feature>
<feature type="transmembrane region" description="Helical" evidence="1">
    <location>
        <begin position="165"/>
        <end position="185"/>
    </location>
</feature>
<feature type="topological domain" description="Cytoplasmic" evidence="1">
    <location>
        <begin position="186"/>
        <end position="213"/>
    </location>
</feature>
<feature type="transmembrane region" description="Helical" evidence="1">
    <location>
        <begin position="214"/>
        <end position="234"/>
    </location>
</feature>
<feature type="topological domain" description="Periplasmic" evidence="1">
    <location>
        <begin position="235"/>
        <end position="243"/>
    </location>
</feature>
<feature type="transmembrane region" description="Helical" evidence="1">
    <location>
        <begin position="244"/>
        <end position="264"/>
    </location>
</feature>
<feature type="topological domain" description="Cytoplasmic" evidence="1">
    <location>
        <begin position="265"/>
        <end position="276"/>
    </location>
</feature>
<feature type="transmembrane region" description="Helical" evidence="1">
    <location>
        <begin position="277"/>
        <end position="297"/>
    </location>
</feature>
<feature type="topological domain" description="Periplasmic" evidence="1">
    <location>
        <begin position="298"/>
        <end position="299"/>
    </location>
</feature>
<feature type="transmembrane region" description="Helical" evidence="1">
    <location>
        <begin position="300"/>
        <end position="320"/>
    </location>
</feature>
<feature type="topological domain" description="Cytoplasmic" evidence="1">
    <location>
        <begin position="321"/>
        <end position="339"/>
    </location>
</feature>
<feature type="transmembrane region" description="Helical" evidence="1">
    <location>
        <begin position="340"/>
        <end position="360"/>
    </location>
</feature>
<feature type="topological domain" description="Periplasmic" evidence="1">
    <location>
        <begin position="361"/>
        <end position="367"/>
    </location>
</feature>
<feature type="transmembrane region" description="Helical" evidence="1">
    <location>
        <begin position="368"/>
        <end position="388"/>
    </location>
</feature>
<feature type="topological domain" description="Cytoplasmic" evidence="1">
    <location>
        <begin position="389"/>
        <end position="402"/>
    </location>
</feature>
<organism>
    <name type="scientific">Escherichia coli (strain UTI89 / UPEC)</name>
    <dbReference type="NCBI Taxonomy" id="364106"/>
    <lineage>
        <taxon>Bacteria</taxon>
        <taxon>Pseudomonadati</taxon>
        <taxon>Pseudomonadota</taxon>
        <taxon>Gammaproteobacteria</taxon>
        <taxon>Enterobacterales</taxon>
        <taxon>Enterobacteriaceae</taxon>
        <taxon>Escherichia</taxon>
    </lineage>
</organism>
<dbReference type="EMBL" id="CP000243">
    <property type="protein sequence ID" value="ABE06672.1"/>
    <property type="status" value="ALT_INIT"/>
    <property type="molecule type" value="Genomic_DNA"/>
</dbReference>
<dbReference type="RefSeq" id="WP_000092206.1">
    <property type="nucleotide sequence ID" value="NZ_CP064825.1"/>
</dbReference>
<dbReference type="SMR" id="Q1RD92"/>
<dbReference type="GeneID" id="75203652"/>
<dbReference type="KEGG" id="eci:UTI89_C1190"/>
<dbReference type="HOGENOM" id="CLU_001265_60_2_6"/>
<dbReference type="Proteomes" id="UP000001952">
    <property type="component" value="Chromosome"/>
</dbReference>
<dbReference type="GO" id="GO:0005886">
    <property type="term" value="C:plasma membrane"/>
    <property type="evidence" value="ECO:0007669"/>
    <property type="project" value="UniProtKB-SubCell"/>
</dbReference>
<dbReference type="GO" id="GO:0022857">
    <property type="term" value="F:transmembrane transporter activity"/>
    <property type="evidence" value="ECO:0007669"/>
    <property type="project" value="UniProtKB-UniRule"/>
</dbReference>
<dbReference type="GO" id="GO:0046677">
    <property type="term" value="P:response to antibiotic"/>
    <property type="evidence" value="ECO:0007669"/>
    <property type="project" value="UniProtKB-KW"/>
</dbReference>
<dbReference type="CDD" id="cd17329">
    <property type="entry name" value="MFS_MdtH_MDR_like"/>
    <property type="match status" value="1"/>
</dbReference>
<dbReference type="FunFam" id="1.20.1250.20:FF:000039">
    <property type="entry name" value="Multidrug resistance protein MdtH"/>
    <property type="match status" value="1"/>
</dbReference>
<dbReference type="Gene3D" id="1.20.1250.20">
    <property type="entry name" value="MFS general substrate transporter like domains"/>
    <property type="match status" value="1"/>
</dbReference>
<dbReference type="HAMAP" id="MF_01529">
    <property type="entry name" value="MFS_MdtH"/>
    <property type="match status" value="1"/>
</dbReference>
<dbReference type="InterPro" id="IPR011701">
    <property type="entry name" value="MFS"/>
</dbReference>
<dbReference type="InterPro" id="IPR020846">
    <property type="entry name" value="MFS_dom"/>
</dbReference>
<dbReference type="InterPro" id="IPR036259">
    <property type="entry name" value="MFS_trans_sf"/>
</dbReference>
<dbReference type="InterPro" id="IPR050171">
    <property type="entry name" value="MFS_Transporters"/>
</dbReference>
<dbReference type="InterPro" id="IPR022855">
    <property type="entry name" value="Multidrug-R_MdtH"/>
</dbReference>
<dbReference type="NCBIfam" id="NF008650">
    <property type="entry name" value="PRK11646.1"/>
    <property type="match status" value="1"/>
</dbReference>
<dbReference type="PANTHER" id="PTHR23517:SF2">
    <property type="entry name" value="MULTIDRUG RESISTANCE PROTEIN MDTH"/>
    <property type="match status" value="1"/>
</dbReference>
<dbReference type="PANTHER" id="PTHR23517">
    <property type="entry name" value="RESISTANCE PROTEIN MDTM, PUTATIVE-RELATED-RELATED"/>
    <property type="match status" value="1"/>
</dbReference>
<dbReference type="Pfam" id="PF07690">
    <property type="entry name" value="MFS_1"/>
    <property type="match status" value="1"/>
</dbReference>
<dbReference type="SUPFAM" id="SSF103473">
    <property type="entry name" value="MFS general substrate transporter"/>
    <property type="match status" value="1"/>
</dbReference>
<dbReference type="PROSITE" id="PS50850">
    <property type="entry name" value="MFS"/>
    <property type="match status" value="1"/>
</dbReference>
<evidence type="ECO:0000255" key="1">
    <source>
        <dbReference type="HAMAP-Rule" id="MF_01529"/>
    </source>
</evidence>
<evidence type="ECO:0000305" key="2"/>
<keyword id="KW-0046">Antibiotic resistance</keyword>
<keyword id="KW-0997">Cell inner membrane</keyword>
<keyword id="KW-1003">Cell membrane</keyword>
<keyword id="KW-0472">Membrane</keyword>
<keyword id="KW-0812">Transmembrane</keyword>
<keyword id="KW-1133">Transmembrane helix</keyword>
<keyword id="KW-0813">Transport</keyword>